<reference key="1">
    <citation type="submission" date="2007-02" db="EMBL/GenBank/DDBJ databases">
        <title>Complete sequence of chromosome of Shewanella baltica OS155.</title>
        <authorList>
            <consortium name="US DOE Joint Genome Institute"/>
            <person name="Copeland A."/>
            <person name="Lucas S."/>
            <person name="Lapidus A."/>
            <person name="Barry K."/>
            <person name="Detter J.C."/>
            <person name="Glavina del Rio T."/>
            <person name="Hammon N."/>
            <person name="Israni S."/>
            <person name="Dalin E."/>
            <person name="Tice H."/>
            <person name="Pitluck S."/>
            <person name="Sims D.R."/>
            <person name="Brettin T."/>
            <person name="Bruce D."/>
            <person name="Han C."/>
            <person name="Tapia R."/>
            <person name="Brainard J."/>
            <person name="Schmutz J."/>
            <person name="Larimer F."/>
            <person name="Land M."/>
            <person name="Hauser L."/>
            <person name="Kyrpides N."/>
            <person name="Mikhailova N."/>
            <person name="Brettar I."/>
            <person name="Klappenbach J."/>
            <person name="Konstantinidis K."/>
            <person name="Rodrigues J."/>
            <person name="Tiedje J."/>
            <person name="Richardson P."/>
        </authorList>
    </citation>
    <scope>NUCLEOTIDE SEQUENCE [LARGE SCALE GENOMIC DNA]</scope>
    <source>
        <strain>OS155 / ATCC BAA-1091</strain>
    </source>
</reference>
<name>RS13_SHEB5</name>
<feature type="chain" id="PRO_1000051891" description="Small ribosomal subunit protein uS13">
    <location>
        <begin position="1"/>
        <end position="118"/>
    </location>
</feature>
<feature type="region of interest" description="Disordered" evidence="2">
    <location>
        <begin position="94"/>
        <end position="118"/>
    </location>
</feature>
<accession>A3DA50</accession>
<sequence length="118" mass="13345">MARIAGINIPDQKHTVIALTAIFGIGRTRARAICAATAIAETAKIKELSEAQIDILREEVAKYIVEGDLRREISMNIKRLMDLGCYRGLRHRRSLPLRGQRTKTNARTRKGPRKPIRK</sequence>
<organism>
    <name type="scientific">Shewanella baltica (strain OS155 / ATCC BAA-1091)</name>
    <dbReference type="NCBI Taxonomy" id="325240"/>
    <lineage>
        <taxon>Bacteria</taxon>
        <taxon>Pseudomonadati</taxon>
        <taxon>Pseudomonadota</taxon>
        <taxon>Gammaproteobacteria</taxon>
        <taxon>Alteromonadales</taxon>
        <taxon>Shewanellaceae</taxon>
        <taxon>Shewanella</taxon>
    </lineage>
</organism>
<proteinExistence type="inferred from homology"/>
<keyword id="KW-1185">Reference proteome</keyword>
<keyword id="KW-0687">Ribonucleoprotein</keyword>
<keyword id="KW-0689">Ribosomal protein</keyword>
<keyword id="KW-0694">RNA-binding</keyword>
<keyword id="KW-0699">rRNA-binding</keyword>
<keyword id="KW-0820">tRNA-binding</keyword>
<evidence type="ECO:0000255" key="1">
    <source>
        <dbReference type="HAMAP-Rule" id="MF_01315"/>
    </source>
</evidence>
<evidence type="ECO:0000256" key="2">
    <source>
        <dbReference type="SAM" id="MobiDB-lite"/>
    </source>
</evidence>
<evidence type="ECO:0000305" key="3"/>
<comment type="function">
    <text evidence="1">Located at the top of the head of the 30S subunit, it contacts several helices of the 16S rRNA. In the 70S ribosome it contacts the 23S rRNA (bridge B1a) and protein L5 of the 50S subunit (bridge B1b), connecting the 2 subunits; these bridges are implicated in subunit movement. Contacts the tRNAs in the A and P-sites.</text>
</comment>
<comment type="subunit">
    <text evidence="1">Part of the 30S ribosomal subunit. Forms a loose heterodimer with protein S19. Forms two bridges to the 50S subunit in the 70S ribosome.</text>
</comment>
<comment type="similarity">
    <text evidence="1">Belongs to the universal ribosomal protein uS13 family.</text>
</comment>
<gene>
    <name evidence="1" type="primary">rpsM</name>
    <name type="ordered locus">Sbal_4148</name>
</gene>
<protein>
    <recommendedName>
        <fullName evidence="1">Small ribosomal subunit protein uS13</fullName>
    </recommendedName>
    <alternativeName>
        <fullName evidence="3">30S ribosomal protein S13</fullName>
    </alternativeName>
</protein>
<dbReference type="EMBL" id="CP000563">
    <property type="protein sequence ID" value="ABN63613.1"/>
    <property type="molecule type" value="Genomic_DNA"/>
</dbReference>
<dbReference type="RefSeq" id="WP_006083578.1">
    <property type="nucleotide sequence ID" value="NC_009052.1"/>
</dbReference>
<dbReference type="SMR" id="A3DA50"/>
<dbReference type="STRING" id="325240.Sbal_4148"/>
<dbReference type="GeneID" id="11770577"/>
<dbReference type="KEGG" id="sbl:Sbal_4148"/>
<dbReference type="HOGENOM" id="CLU_103849_1_2_6"/>
<dbReference type="OrthoDB" id="9803610at2"/>
<dbReference type="Proteomes" id="UP000001557">
    <property type="component" value="Chromosome"/>
</dbReference>
<dbReference type="GO" id="GO:0005829">
    <property type="term" value="C:cytosol"/>
    <property type="evidence" value="ECO:0007669"/>
    <property type="project" value="TreeGrafter"/>
</dbReference>
<dbReference type="GO" id="GO:0015935">
    <property type="term" value="C:small ribosomal subunit"/>
    <property type="evidence" value="ECO:0007669"/>
    <property type="project" value="TreeGrafter"/>
</dbReference>
<dbReference type="GO" id="GO:0019843">
    <property type="term" value="F:rRNA binding"/>
    <property type="evidence" value="ECO:0007669"/>
    <property type="project" value="UniProtKB-UniRule"/>
</dbReference>
<dbReference type="GO" id="GO:0003735">
    <property type="term" value="F:structural constituent of ribosome"/>
    <property type="evidence" value="ECO:0007669"/>
    <property type="project" value="InterPro"/>
</dbReference>
<dbReference type="GO" id="GO:0000049">
    <property type="term" value="F:tRNA binding"/>
    <property type="evidence" value="ECO:0007669"/>
    <property type="project" value="UniProtKB-UniRule"/>
</dbReference>
<dbReference type="GO" id="GO:0006412">
    <property type="term" value="P:translation"/>
    <property type="evidence" value="ECO:0007669"/>
    <property type="project" value="UniProtKB-UniRule"/>
</dbReference>
<dbReference type="FunFam" id="1.10.8.50:FF:000001">
    <property type="entry name" value="30S ribosomal protein S13"/>
    <property type="match status" value="1"/>
</dbReference>
<dbReference type="FunFam" id="4.10.910.10:FF:000001">
    <property type="entry name" value="30S ribosomal protein S13"/>
    <property type="match status" value="1"/>
</dbReference>
<dbReference type="Gene3D" id="1.10.8.50">
    <property type="match status" value="1"/>
</dbReference>
<dbReference type="Gene3D" id="4.10.910.10">
    <property type="entry name" value="30s ribosomal protein s13, domain 2"/>
    <property type="match status" value="1"/>
</dbReference>
<dbReference type="HAMAP" id="MF_01315">
    <property type="entry name" value="Ribosomal_uS13"/>
    <property type="match status" value="1"/>
</dbReference>
<dbReference type="InterPro" id="IPR027437">
    <property type="entry name" value="Rbsml_uS13_C"/>
</dbReference>
<dbReference type="InterPro" id="IPR001892">
    <property type="entry name" value="Ribosomal_uS13"/>
</dbReference>
<dbReference type="InterPro" id="IPR010979">
    <property type="entry name" value="Ribosomal_uS13-like_H2TH"/>
</dbReference>
<dbReference type="InterPro" id="IPR019980">
    <property type="entry name" value="Ribosomal_uS13_bac-type"/>
</dbReference>
<dbReference type="InterPro" id="IPR018269">
    <property type="entry name" value="Ribosomal_uS13_CS"/>
</dbReference>
<dbReference type="NCBIfam" id="TIGR03631">
    <property type="entry name" value="uS13_bact"/>
    <property type="match status" value="1"/>
</dbReference>
<dbReference type="PANTHER" id="PTHR10871">
    <property type="entry name" value="30S RIBOSOMAL PROTEIN S13/40S RIBOSOMAL PROTEIN S18"/>
    <property type="match status" value="1"/>
</dbReference>
<dbReference type="PANTHER" id="PTHR10871:SF1">
    <property type="entry name" value="SMALL RIBOSOMAL SUBUNIT PROTEIN US13M"/>
    <property type="match status" value="1"/>
</dbReference>
<dbReference type="Pfam" id="PF00416">
    <property type="entry name" value="Ribosomal_S13"/>
    <property type="match status" value="1"/>
</dbReference>
<dbReference type="PIRSF" id="PIRSF002134">
    <property type="entry name" value="Ribosomal_S13"/>
    <property type="match status" value="1"/>
</dbReference>
<dbReference type="SUPFAM" id="SSF46946">
    <property type="entry name" value="S13-like H2TH domain"/>
    <property type="match status" value="1"/>
</dbReference>
<dbReference type="PROSITE" id="PS00646">
    <property type="entry name" value="RIBOSOMAL_S13_1"/>
    <property type="match status" value="1"/>
</dbReference>
<dbReference type="PROSITE" id="PS50159">
    <property type="entry name" value="RIBOSOMAL_S13_2"/>
    <property type="match status" value="1"/>
</dbReference>